<name>SYS_SACI6</name>
<keyword id="KW-0030">Aminoacyl-tRNA synthetase</keyword>
<keyword id="KW-0067">ATP-binding</keyword>
<keyword id="KW-0963">Cytoplasm</keyword>
<keyword id="KW-0436">Ligase</keyword>
<keyword id="KW-0547">Nucleotide-binding</keyword>
<keyword id="KW-0648">Protein biosynthesis</keyword>
<proteinExistence type="inferred from homology"/>
<feature type="chain" id="PRO_1000203770" description="Serine--tRNA ligase">
    <location>
        <begin position="1"/>
        <end position="457"/>
    </location>
</feature>
<feature type="binding site" evidence="1">
    <location>
        <begin position="252"/>
        <end position="254"/>
    </location>
    <ligand>
        <name>L-serine</name>
        <dbReference type="ChEBI" id="CHEBI:33384"/>
    </ligand>
</feature>
<feature type="binding site" evidence="1">
    <location>
        <begin position="283"/>
        <end position="285"/>
    </location>
    <ligand>
        <name>ATP</name>
        <dbReference type="ChEBI" id="CHEBI:30616"/>
    </ligand>
</feature>
<feature type="binding site" evidence="1">
    <location>
        <position position="299"/>
    </location>
    <ligand>
        <name>ATP</name>
        <dbReference type="ChEBI" id="CHEBI:30616"/>
    </ligand>
</feature>
<feature type="binding site" evidence="1">
    <location>
        <position position="306"/>
    </location>
    <ligand>
        <name>L-serine</name>
        <dbReference type="ChEBI" id="CHEBI:33384"/>
    </ligand>
</feature>
<feature type="binding site" evidence="1">
    <location>
        <begin position="370"/>
        <end position="373"/>
    </location>
    <ligand>
        <name>ATP</name>
        <dbReference type="ChEBI" id="CHEBI:30616"/>
    </ligand>
</feature>
<feature type="binding site" evidence="1">
    <location>
        <position position="406"/>
    </location>
    <ligand>
        <name>L-serine</name>
        <dbReference type="ChEBI" id="CHEBI:33384"/>
    </ligand>
</feature>
<comment type="function">
    <text evidence="1">Catalyzes the attachment of serine to tRNA(Ser). Is also able to aminoacylate tRNA(Sec) with serine, to form the misacylated tRNA L-seryl-tRNA(Sec), which will be further converted into selenocysteinyl-tRNA(Sec).</text>
</comment>
<comment type="catalytic activity">
    <reaction evidence="1">
        <text>tRNA(Ser) + L-serine + ATP = L-seryl-tRNA(Ser) + AMP + diphosphate + H(+)</text>
        <dbReference type="Rhea" id="RHEA:12292"/>
        <dbReference type="Rhea" id="RHEA-COMP:9669"/>
        <dbReference type="Rhea" id="RHEA-COMP:9703"/>
        <dbReference type="ChEBI" id="CHEBI:15378"/>
        <dbReference type="ChEBI" id="CHEBI:30616"/>
        <dbReference type="ChEBI" id="CHEBI:33019"/>
        <dbReference type="ChEBI" id="CHEBI:33384"/>
        <dbReference type="ChEBI" id="CHEBI:78442"/>
        <dbReference type="ChEBI" id="CHEBI:78533"/>
        <dbReference type="ChEBI" id="CHEBI:456215"/>
        <dbReference type="EC" id="6.1.1.11"/>
    </reaction>
</comment>
<comment type="catalytic activity">
    <reaction evidence="1">
        <text>tRNA(Sec) + L-serine + ATP = L-seryl-tRNA(Sec) + AMP + diphosphate + H(+)</text>
        <dbReference type="Rhea" id="RHEA:42580"/>
        <dbReference type="Rhea" id="RHEA-COMP:9742"/>
        <dbReference type="Rhea" id="RHEA-COMP:10128"/>
        <dbReference type="ChEBI" id="CHEBI:15378"/>
        <dbReference type="ChEBI" id="CHEBI:30616"/>
        <dbReference type="ChEBI" id="CHEBI:33019"/>
        <dbReference type="ChEBI" id="CHEBI:33384"/>
        <dbReference type="ChEBI" id="CHEBI:78442"/>
        <dbReference type="ChEBI" id="CHEBI:78533"/>
        <dbReference type="ChEBI" id="CHEBI:456215"/>
        <dbReference type="EC" id="6.1.1.11"/>
    </reaction>
</comment>
<comment type="pathway">
    <text evidence="1">Aminoacyl-tRNA biosynthesis; selenocysteinyl-tRNA(Sec) biosynthesis; L-seryl-tRNA(Sec) from L-serine and tRNA(Sec): step 1/1.</text>
</comment>
<comment type="subunit">
    <text evidence="1">Homodimer. The tRNA molecule binds across the dimer.</text>
</comment>
<comment type="subcellular location">
    <subcellularLocation>
        <location evidence="1">Cytoplasm</location>
    </subcellularLocation>
</comment>
<comment type="domain">
    <text evidence="1">Consists of two distinct domains, a catalytic core and a N-terminal extension that is involved in tRNA binding.</text>
</comment>
<comment type="similarity">
    <text evidence="1">Belongs to the class-II aminoacyl-tRNA synthetase family. Type-1 seryl-tRNA synthetase subfamily.</text>
</comment>
<accession>C4KHR4</accession>
<reference key="1">
    <citation type="journal article" date="2009" name="Proc. Natl. Acad. Sci. U.S.A.">
        <title>Biogeography of the Sulfolobus islandicus pan-genome.</title>
        <authorList>
            <person name="Reno M.L."/>
            <person name="Held N.L."/>
            <person name="Fields C.J."/>
            <person name="Burke P.V."/>
            <person name="Whitaker R.J."/>
        </authorList>
    </citation>
    <scope>NUCLEOTIDE SEQUENCE [LARGE SCALE GENOMIC DNA]</scope>
    <source>
        <strain>M.16.4 / Kamchatka #3</strain>
    </source>
</reference>
<sequence>MSWSILEFLRKNPEELKNNLKRRAIDVSLVDKAVELDKKWRQVLQEVERLRHQHNVLSSQIPKLSGEERKKKIEESKNLLKILEDKEKELEKIEVERDRLLSSLPNLVADDVPNGPDDSYNIPIKFWGKFKVYEGDVEEFLRQTKDANVNYEIIKWKPKGHAEMLEDVLHLGNTLKAAEIAGSRFYYLFNDIVWLDFALLLFAIDYITQQGYTLVLPPYMLRGEVIQSVIDLDTFKDAIYKIENEDLYLIATAEHSIAAMFFKEEIEKDKLPLKFAGISPAFRKEAGAANKDLKGIFRVHQFHKVEQFIFSTPEDSWKYHAELITNAESIFQQLELPYRIVNIASGDLGACAAKKFDLEVWMPAQAKFREMVSCSNCTDWQAFRMKIRYVDRKNNKRGYVHTLNSTAIASTRTITAILENYQREDGVVEVPKVLRKYLEIFPKAPKDYIYPLKNKII</sequence>
<evidence type="ECO:0000255" key="1">
    <source>
        <dbReference type="HAMAP-Rule" id="MF_00176"/>
    </source>
</evidence>
<organism>
    <name type="scientific">Saccharolobus islandicus (strain M.16.4 / Kamchatka #3)</name>
    <name type="common">Sulfolobus islandicus</name>
    <dbReference type="NCBI Taxonomy" id="426118"/>
    <lineage>
        <taxon>Archaea</taxon>
        <taxon>Thermoproteota</taxon>
        <taxon>Thermoprotei</taxon>
        <taxon>Sulfolobales</taxon>
        <taxon>Sulfolobaceae</taxon>
        <taxon>Saccharolobus</taxon>
    </lineage>
</organism>
<gene>
    <name evidence="1" type="primary">serS</name>
    <name type="ordered locus">M164_1527</name>
</gene>
<protein>
    <recommendedName>
        <fullName evidence="1">Serine--tRNA ligase</fullName>
        <ecNumber evidence="1">6.1.1.11</ecNumber>
    </recommendedName>
    <alternativeName>
        <fullName evidence="1">Seryl-tRNA synthetase</fullName>
        <shortName evidence="1">SerRS</shortName>
    </alternativeName>
    <alternativeName>
        <fullName evidence="1">Seryl-tRNA(Ser/Sec) synthetase</fullName>
    </alternativeName>
</protein>
<dbReference type="EC" id="6.1.1.11" evidence="1"/>
<dbReference type="EMBL" id="CP001402">
    <property type="protein sequence ID" value="ACR42128.1"/>
    <property type="molecule type" value="Genomic_DNA"/>
</dbReference>
<dbReference type="RefSeq" id="WP_012713805.1">
    <property type="nucleotide sequence ID" value="NC_012726.1"/>
</dbReference>
<dbReference type="SMR" id="C4KHR4"/>
<dbReference type="GeneID" id="84058936"/>
<dbReference type="KEGG" id="sid:M164_1527"/>
<dbReference type="HOGENOM" id="CLU_023797_0_1_2"/>
<dbReference type="UniPathway" id="UPA00906">
    <property type="reaction ID" value="UER00895"/>
</dbReference>
<dbReference type="Proteomes" id="UP000001479">
    <property type="component" value="Chromosome"/>
</dbReference>
<dbReference type="GO" id="GO:0005737">
    <property type="term" value="C:cytoplasm"/>
    <property type="evidence" value="ECO:0007669"/>
    <property type="project" value="UniProtKB-SubCell"/>
</dbReference>
<dbReference type="GO" id="GO:0005524">
    <property type="term" value="F:ATP binding"/>
    <property type="evidence" value="ECO:0007669"/>
    <property type="project" value="UniProtKB-UniRule"/>
</dbReference>
<dbReference type="GO" id="GO:0004828">
    <property type="term" value="F:serine-tRNA ligase activity"/>
    <property type="evidence" value="ECO:0007669"/>
    <property type="project" value="UniProtKB-UniRule"/>
</dbReference>
<dbReference type="GO" id="GO:0016260">
    <property type="term" value="P:selenocysteine biosynthetic process"/>
    <property type="evidence" value="ECO:0007669"/>
    <property type="project" value="UniProtKB-UniRule"/>
</dbReference>
<dbReference type="GO" id="GO:0006434">
    <property type="term" value="P:seryl-tRNA aminoacylation"/>
    <property type="evidence" value="ECO:0007669"/>
    <property type="project" value="UniProtKB-UniRule"/>
</dbReference>
<dbReference type="CDD" id="cd00770">
    <property type="entry name" value="SerRS_core"/>
    <property type="match status" value="1"/>
</dbReference>
<dbReference type="FunFam" id="1.10.287.40:FF:000004">
    <property type="entry name" value="Serine--tRNA ligase"/>
    <property type="match status" value="1"/>
</dbReference>
<dbReference type="FunFam" id="3.30.930.10:FF:000048">
    <property type="entry name" value="Serine--tRNA ligase"/>
    <property type="match status" value="1"/>
</dbReference>
<dbReference type="Gene3D" id="3.30.930.10">
    <property type="entry name" value="Bira Bifunctional Protein, Domain 2"/>
    <property type="match status" value="1"/>
</dbReference>
<dbReference type="Gene3D" id="1.10.287.40">
    <property type="entry name" value="Serine-tRNA synthetase, tRNA binding domain"/>
    <property type="match status" value="1"/>
</dbReference>
<dbReference type="HAMAP" id="MF_00176">
    <property type="entry name" value="Ser_tRNA_synth_type1"/>
    <property type="match status" value="1"/>
</dbReference>
<dbReference type="InterPro" id="IPR002314">
    <property type="entry name" value="aa-tRNA-synt_IIb"/>
</dbReference>
<dbReference type="InterPro" id="IPR006195">
    <property type="entry name" value="aa-tRNA-synth_II"/>
</dbReference>
<dbReference type="InterPro" id="IPR045864">
    <property type="entry name" value="aa-tRNA-synth_II/BPL/LPL"/>
</dbReference>
<dbReference type="InterPro" id="IPR002317">
    <property type="entry name" value="Ser-tRNA-ligase_type_1"/>
</dbReference>
<dbReference type="InterPro" id="IPR015866">
    <property type="entry name" value="Ser-tRNA-synth_1_N"/>
</dbReference>
<dbReference type="InterPro" id="IPR042103">
    <property type="entry name" value="SerRS_1_N_sf"/>
</dbReference>
<dbReference type="InterPro" id="IPR033729">
    <property type="entry name" value="SerRS_core"/>
</dbReference>
<dbReference type="InterPro" id="IPR010978">
    <property type="entry name" value="tRNA-bd_arm"/>
</dbReference>
<dbReference type="NCBIfam" id="TIGR00414">
    <property type="entry name" value="serS"/>
    <property type="match status" value="1"/>
</dbReference>
<dbReference type="PANTHER" id="PTHR11778">
    <property type="entry name" value="SERYL-TRNA SYNTHETASE"/>
    <property type="match status" value="1"/>
</dbReference>
<dbReference type="Pfam" id="PF02403">
    <property type="entry name" value="Seryl_tRNA_N"/>
    <property type="match status" value="1"/>
</dbReference>
<dbReference type="Pfam" id="PF00587">
    <property type="entry name" value="tRNA-synt_2b"/>
    <property type="match status" value="1"/>
</dbReference>
<dbReference type="PIRSF" id="PIRSF001529">
    <property type="entry name" value="Ser-tRNA-synth_IIa"/>
    <property type="match status" value="1"/>
</dbReference>
<dbReference type="PRINTS" id="PR00981">
    <property type="entry name" value="TRNASYNTHSER"/>
</dbReference>
<dbReference type="SUPFAM" id="SSF55681">
    <property type="entry name" value="Class II aaRS and biotin synthetases"/>
    <property type="match status" value="1"/>
</dbReference>
<dbReference type="SUPFAM" id="SSF46589">
    <property type="entry name" value="tRNA-binding arm"/>
    <property type="match status" value="1"/>
</dbReference>
<dbReference type="PROSITE" id="PS50862">
    <property type="entry name" value="AA_TRNA_LIGASE_II"/>
    <property type="match status" value="1"/>
</dbReference>